<comment type="function">
    <text evidence="1">An aminoacyl-tRNA editing enzyme that deacylates mischarged D-aminoacyl-tRNAs. Also deacylates mischarged glycyl-tRNA(Ala), protecting cells against glycine mischarging by AlaRS. Acts via tRNA-based rather than protein-based catalysis; rejects L-amino acids rather than detecting D-amino acids in the active site. By recycling D-aminoacyl-tRNA to D-amino acids and free tRNA molecules, this enzyme counteracts the toxicity associated with the formation of D-aminoacyl-tRNA entities in vivo and helps enforce protein L-homochirality.</text>
</comment>
<comment type="catalytic activity">
    <reaction evidence="1">
        <text>glycyl-tRNA(Ala) + H2O = tRNA(Ala) + glycine + H(+)</text>
        <dbReference type="Rhea" id="RHEA:53744"/>
        <dbReference type="Rhea" id="RHEA-COMP:9657"/>
        <dbReference type="Rhea" id="RHEA-COMP:13640"/>
        <dbReference type="ChEBI" id="CHEBI:15377"/>
        <dbReference type="ChEBI" id="CHEBI:15378"/>
        <dbReference type="ChEBI" id="CHEBI:57305"/>
        <dbReference type="ChEBI" id="CHEBI:78442"/>
        <dbReference type="ChEBI" id="CHEBI:78522"/>
        <dbReference type="EC" id="3.1.1.96"/>
    </reaction>
</comment>
<comment type="catalytic activity">
    <reaction evidence="1">
        <text>a D-aminoacyl-tRNA + H2O = a tRNA + a D-alpha-amino acid + H(+)</text>
        <dbReference type="Rhea" id="RHEA:13953"/>
        <dbReference type="Rhea" id="RHEA-COMP:10123"/>
        <dbReference type="Rhea" id="RHEA-COMP:10124"/>
        <dbReference type="ChEBI" id="CHEBI:15377"/>
        <dbReference type="ChEBI" id="CHEBI:15378"/>
        <dbReference type="ChEBI" id="CHEBI:59871"/>
        <dbReference type="ChEBI" id="CHEBI:78442"/>
        <dbReference type="ChEBI" id="CHEBI:79333"/>
        <dbReference type="EC" id="3.1.1.96"/>
    </reaction>
</comment>
<comment type="subunit">
    <text evidence="1">Homodimer.</text>
</comment>
<comment type="subcellular location">
    <subcellularLocation>
        <location evidence="1">Cytoplasm</location>
    </subcellularLocation>
</comment>
<comment type="domain">
    <text evidence="1">A Gly-cisPro motif from one monomer fits into the active site of the other monomer to allow specific chiral rejection of L-amino acids.</text>
</comment>
<comment type="similarity">
    <text evidence="2">Belongs to the DTD family.</text>
</comment>
<accession>Q75E22</accession>
<feature type="chain" id="PRO_0000164629" description="D-aminoacyl-tRNA deacylase">
    <location>
        <begin position="1"/>
        <end position="150"/>
    </location>
</feature>
<feature type="short sequence motif" description="Gly-cisPro motif, important for rejection of L-amino acids" evidence="1">
    <location>
        <begin position="140"/>
        <end position="141"/>
    </location>
</feature>
<proteinExistence type="inferred from homology"/>
<sequence length="150" mass="16807">MRVVIQRVSQASVVVENKLISSIKTGYMLLVGISTEDTIADIEKSVRKVSGLRLFPDDSNAQWKRSIKDIGGEVLSISQFTLIARTKKGTRPDFHEAQKGHLALEMYDRFLDLLRQELGEKQVQDGEFGAMMSCSLTNEGPVTIIYDTKE</sequence>
<reference key="1">
    <citation type="journal article" date="2004" name="Science">
        <title>The Ashbya gossypii genome as a tool for mapping the ancient Saccharomyces cerevisiae genome.</title>
        <authorList>
            <person name="Dietrich F.S."/>
            <person name="Voegeli S."/>
            <person name="Brachat S."/>
            <person name="Lerch A."/>
            <person name="Gates K."/>
            <person name="Steiner S."/>
            <person name="Mohr C."/>
            <person name="Poehlmann R."/>
            <person name="Luedi P."/>
            <person name="Choi S."/>
            <person name="Wing R.A."/>
            <person name="Flavier A."/>
            <person name="Gaffney T.D."/>
            <person name="Philippsen P."/>
        </authorList>
    </citation>
    <scope>NUCLEOTIDE SEQUENCE [LARGE SCALE GENOMIC DNA]</scope>
    <source>
        <strain>ATCC 10895 / CBS 109.51 / FGSC 9923 / NRRL Y-1056</strain>
    </source>
</reference>
<reference key="2">
    <citation type="journal article" date="2013" name="G3 (Bethesda)">
        <title>Genomes of Ashbya fungi isolated from insects reveal four mating-type loci, numerous translocations, lack of transposons, and distinct gene duplications.</title>
        <authorList>
            <person name="Dietrich F.S."/>
            <person name="Voegeli S."/>
            <person name="Kuo S."/>
            <person name="Philippsen P."/>
        </authorList>
    </citation>
    <scope>GENOME REANNOTATION</scope>
    <scope>SEQUENCE REVISION TO 114; 19 AND 127</scope>
    <source>
        <strain>ATCC 10895 / CBS 109.51 / FGSC 9923 / NRRL Y-1056</strain>
    </source>
</reference>
<dbReference type="EC" id="3.1.1.96" evidence="1"/>
<dbReference type="EMBL" id="AE016815">
    <property type="protein sequence ID" value="AAS50619.2"/>
    <property type="molecule type" value="Genomic_DNA"/>
</dbReference>
<dbReference type="RefSeq" id="NP_982795.2">
    <property type="nucleotide sequence ID" value="NM_208148.2"/>
</dbReference>
<dbReference type="SMR" id="Q75E22"/>
<dbReference type="FunCoup" id="Q75E22">
    <property type="interactions" value="1627"/>
</dbReference>
<dbReference type="STRING" id="284811.Q75E22"/>
<dbReference type="EnsemblFungi" id="AAS50619">
    <property type="protein sequence ID" value="AAS50619"/>
    <property type="gene ID" value="AGOS_ABL152W"/>
</dbReference>
<dbReference type="GeneID" id="4618875"/>
<dbReference type="KEGG" id="ago:AGOS_ABL152W"/>
<dbReference type="eggNOG" id="KOG3323">
    <property type="taxonomic scope" value="Eukaryota"/>
</dbReference>
<dbReference type="HOGENOM" id="CLU_076901_0_4_1"/>
<dbReference type="InParanoid" id="Q75E22"/>
<dbReference type="OMA" id="VFGADMK"/>
<dbReference type="OrthoDB" id="275783at2759"/>
<dbReference type="Proteomes" id="UP000000591">
    <property type="component" value="Chromosome II"/>
</dbReference>
<dbReference type="GO" id="GO:0005737">
    <property type="term" value="C:cytoplasm"/>
    <property type="evidence" value="ECO:0000318"/>
    <property type="project" value="GO_Central"/>
</dbReference>
<dbReference type="GO" id="GO:0097358">
    <property type="term" value="F:D-leucyl-tRNA(Leu) deacylase activity"/>
    <property type="evidence" value="ECO:0007669"/>
    <property type="project" value="EnsemblFungi"/>
</dbReference>
<dbReference type="GO" id="GO:0051500">
    <property type="term" value="F:D-tyrosyl-tRNA(Tyr) deacylase activity"/>
    <property type="evidence" value="ECO:0000318"/>
    <property type="project" value="GO_Central"/>
</dbReference>
<dbReference type="GO" id="GO:0000049">
    <property type="term" value="F:tRNA binding"/>
    <property type="evidence" value="ECO:0007669"/>
    <property type="project" value="UniProtKB-KW"/>
</dbReference>
<dbReference type="GO" id="GO:1900832">
    <property type="term" value="P:D-leucine catabolic process"/>
    <property type="evidence" value="ECO:0007669"/>
    <property type="project" value="EnsemblFungi"/>
</dbReference>
<dbReference type="GO" id="GO:1900829">
    <property type="term" value="P:D-tyrosine catabolic process"/>
    <property type="evidence" value="ECO:0007669"/>
    <property type="project" value="EnsemblFungi"/>
</dbReference>
<dbReference type="GO" id="GO:0006399">
    <property type="term" value="P:tRNA metabolic process"/>
    <property type="evidence" value="ECO:0000318"/>
    <property type="project" value="GO_Central"/>
</dbReference>
<dbReference type="FunFam" id="3.50.80.10:FF:000001">
    <property type="entry name" value="D-aminoacyl-tRNA deacylase"/>
    <property type="match status" value="1"/>
</dbReference>
<dbReference type="Gene3D" id="3.50.80.10">
    <property type="entry name" value="D-tyrosyl-tRNA(Tyr) deacylase"/>
    <property type="match status" value="1"/>
</dbReference>
<dbReference type="HAMAP" id="MF_00518">
    <property type="entry name" value="Deacylase_Dtd"/>
    <property type="match status" value="1"/>
</dbReference>
<dbReference type="InterPro" id="IPR003732">
    <property type="entry name" value="Daa-tRNA_deacyls_DTD"/>
</dbReference>
<dbReference type="InterPro" id="IPR023509">
    <property type="entry name" value="DTD-like_sf"/>
</dbReference>
<dbReference type="NCBIfam" id="TIGR00256">
    <property type="entry name" value="D-aminoacyl-tRNA deacylase"/>
    <property type="match status" value="1"/>
</dbReference>
<dbReference type="PANTHER" id="PTHR10472:SF5">
    <property type="entry name" value="D-AMINOACYL-TRNA DEACYLASE 1"/>
    <property type="match status" value="1"/>
</dbReference>
<dbReference type="PANTHER" id="PTHR10472">
    <property type="entry name" value="D-TYROSYL-TRNA TYR DEACYLASE"/>
    <property type="match status" value="1"/>
</dbReference>
<dbReference type="Pfam" id="PF02580">
    <property type="entry name" value="Tyr_Deacylase"/>
    <property type="match status" value="1"/>
</dbReference>
<dbReference type="SUPFAM" id="SSF69500">
    <property type="entry name" value="DTD-like"/>
    <property type="match status" value="1"/>
</dbReference>
<protein>
    <recommendedName>
        <fullName evidence="1">D-aminoacyl-tRNA deacylase</fullName>
        <shortName>DTD</shortName>
        <ecNumber evidence="1">3.1.1.96</ecNumber>
    </recommendedName>
    <alternativeName>
        <fullName evidence="1">Gly-tRNA(Ala) deacylase</fullName>
    </alternativeName>
</protein>
<keyword id="KW-0963">Cytoplasm</keyword>
<keyword id="KW-0378">Hydrolase</keyword>
<keyword id="KW-1185">Reference proteome</keyword>
<keyword id="KW-0694">RNA-binding</keyword>
<keyword id="KW-0820">tRNA-binding</keyword>
<gene>
    <name type="primary">DTD1</name>
    <name type="ordered locus">ABL152W</name>
</gene>
<evidence type="ECO:0000250" key="1">
    <source>
        <dbReference type="UniProtKB" id="Q8IIS0"/>
    </source>
</evidence>
<evidence type="ECO:0000305" key="2"/>
<name>DTD_EREGS</name>
<organism>
    <name type="scientific">Eremothecium gossypii (strain ATCC 10895 / CBS 109.51 / FGSC 9923 / NRRL Y-1056)</name>
    <name type="common">Yeast</name>
    <name type="synonym">Ashbya gossypii</name>
    <dbReference type="NCBI Taxonomy" id="284811"/>
    <lineage>
        <taxon>Eukaryota</taxon>
        <taxon>Fungi</taxon>
        <taxon>Dikarya</taxon>
        <taxon>Ascomycota</taxon>
        <taxon>Saccharomycotina</taxon>
        <taxon>Saccharomycetes</taxon>
        <taxon>Saccharomycetales</taxon>
        <taxon>Saccharomycetaceae</taxon>
        <taxon>Eremothecium</taxon>
    </lineage>
</organism>